<evidence type="ECO:0000255" key="1">
    <source>
        <dbReference type="HAMAP-Rule" id="MF_01361"/>
    </source>
</evidence>
<keyword id="KW-1003">Cell membrane</keyword>
<keyword id="KW-0472">Membrane</keyword>
<keyword id="KW-0812">Transmembrane</keyword>
<keyword id="KW-1133">Transmembrane helix</keyword>
<protein>
    <recommendedName>
        <fullName evidence="1">UPF0391 membrane protein YPK_3631</fullName>
    </recommendedName>
</protein>
<feature type="chain" id="PRO_1000143730" description="UPF0391 membrane protein YPK_3631">
    <location>
        <begin position="1"/>
        <end position="53"/>
    </location>
</feature>
<feature type="transmembrane region" description="Helical" evidence="1">
    <location>
        <begin position="4"/>
        <end position="24"/>
    </location>
</feature>
<feature type="transmembrane region" description="Helical" evidence="1">
    <location>
        <begin position="27"/>
        <end position="47"/>
    </location>
</feature>
<organism>
    <name type="scientific">Yersinia pseudotuberculosis serotype O:3 (strain YPIII)</name>
    <dbReference type="NCBI Taxonomy" id="502800"/>
    <lineage>
        <taxon>Bacteria</taxon>
        <taxon>Pseudomonadati</taxon>
        <taxon>Pseudomonadota</taxon>
        <taxon>Gammaproteobacteria</taxon>
        <taxon>Enterobacterales</taxon>
        <taxon>Yersiniaceae</taxon>
        <taxon>Yersinia</taxon>
    </lineage>
</organism>
<accession>B1JL41</accession>
<gene>
    <name type="ordered locus">YPK_3631</name>
</gene>
<name>Y3631_YERPY</name>
<proteinExistence type="inferred from homology"/>
<reference key="1">
    <citation type="submission" date="2008-02" db="EMBL/GenBank/DDBJ databases">
        <title>Complete sequence of Yersinia pseudotuberculosis YPIII.</title>
        <authorList>
            <consortium name="US DOE Joint Genome Institute"/>
            <person name="Copeland A."/>
            <person name="Lucas S."/>
            <person name="Lapidus A."/>
            <person name="Glavina del Rio T."/>
            <person name="Dalin E."/>
            <person name="Tice H."/>
            <person name="Bruce D."/>
            <person name="Goodwin L."/>
            <person name="Pitluck S."/>
            <person name="Munk A.C."/>
            <person name="Brettin T."/>
            <person name="Detter J.C."/>
            <person name="Han C."/>
            <person name="Tapia R."/>
            <person name="Schmutz J."/>
            <person name="Larimer F."/>
            <person name="Land M."/>
            <person name="Hauser L."/>
            <person name="Challacombe J.F."/>
            <person name="Green L."/>
            <person name="Lindler L.E."/>
            <person name="Nikolich M.P."/>
            <person name="Richardson P."/>
        </authorList>
    </citation>
    <scope>NUCLEOTIDE SEQUENCE [LARGE SCALE GENOMIC DNA]</scope>
    <source>
        <strain>YPIII</strain>
    </source>
</reference>
<comment type="subcellular location">
    <subcellularLocation>
        <location evidence="1">Cell membrane</location>
        <topology evidence="1">Multi-pass membrane protein</topology>
    </subcellularLocation>
</comment>
<comment type="similarity">
    <text evidence="1">Belongs to the UPF0391 family.</text>
</comment>
<sequence>MFRWGIIFLIIALIAAALGFGGLAGTAAWAAKVVFVVGIILFLISLFTGRKRL</sequence>
<dbReference type="EMBL" id="CP000950">
    <property type="protein sequence ID" value="ACA69898.1"/>
    <property type="molecule type" value="Genomic_DNA"/>
</dbReference>
<dbReference type="RefSeq" id="WP_011191683.1">
    <property type="nucleotide sequence ID" value="NZ_CP009792.1"/>
</dbReference>
<dbReference type="KEGG" id="ypy:YPK_3631"/>
<dbReference type="PATRIC" id="fig|502800.11.peg.4383"/>
<dbReference type="GO" id="GO:0005886">
    <property type="term" value="C:plasma membrane"/>
    <property type="evidence" value="ECO:0007669"/>
    <property type="project" value="UniProtKB-SubCell"/>
</dbReference>
<dbReference type="HAMAP" id="MF_01361">
    <property type="entry name" value="UPF0391"/>
    <property type="match status" value="1"/>
</dbReference>
<dbReference type="InterPro" id="IPR009760">
    <property type="entry name" value="DUF1328"/>
</dbReference>
<dbReference type="NCBIfam" id="NF010229">
    <property type="entry name" value="PRK13682.1-4"/>
    <property type="match status" value="1"/>
</dbReference>
<dbReference type="NCBIfam" id="NF010230">
    <property type="entry name" value="PRK13682.1-5"/>
    <property type="match status" value="1"/>
</dbReference>
<dbReference type="Pfam" id="PF07043">
    <property type="entry name" value="DUF1328"/>
    <property type="match status" value="1"/>
</dbReference>
<dbReference type="PIRSF" id="PIRSF036466">
    <property type="entry name" value="UCP036466"/>
    <property type="match status" value="1"/>
</dbReference>